<sequence>MNIEEFDYDLPESLIAQTPLKDRDHSRLLVMDRETGEMKHLHFKDIIEYFRPGDTLVLNDTRVMPARLFGLKEETGAKVEMLMLTQIEGNDWEVLLKPAKRIKVGNKLNFGNGKIIAECIKEMDQGGRIMRLHYEGILQERLDELGEMPLPPYIKERLDDPDRYQTVYAKESGSAAAPTAGLHFTDELLTEIKNKGVNIAFVTLHVGLGTFRPVSVDDVNDHEMHSEYYQMTQETADLLNDTKSKGHRIISVGTTSTRTLETIRRDHDKFVETSGWTNIFIYPGFDFKAIDGQITNFHLPKSTLVMLVSAFSTRENVLNAYKTAVNLEYRFFSFGDAMLII</sequence>
<name>QUEA_STAAR</name>
<gene>
    <name evidence="1" type="primary">queA</name>
    <name type="ordered locus">SAR1720</name>
</gene>
<organism>
    <name type="scientific">Staphylococcus aureus (strain MRSA252)</name>
    <dbReference type="NCBI Taxonomy" id="282458"/>
    <lineage>
        <taxon>Bacteria</taxon>
        <taxon>Bacillati</taxon>
        <taxon>Bacillota</taxon>
        <taxon>Bacilli</taxon>
        <taxon>Bacillales</taxon>
        <taxon>Staphylococcaceae</taxon>
        <taxon>Staphylococcus</taxon>
    </lineage>
</organism>
<reference key="1">
    <citation type="journal article" date="2004" name="Proc. Natl. Acad. Sci. U.S.A.">
        <title>Complete genomes of two clinical Staphylococcus aureus strains: evidence for the rapid evolution of virulence and drug resistance.</title>
        <authorList>
            <person name="Holden M.T.G."/>
            <person name="Feil E.J."/>
            <person name="Lindsay J.A."/>
            <person name="Peacock S.J."/>
            <person name="Day N.P.J."/>
            <person name="Enright M.C."/>
            <person name="Foster T.J."/>
            <person name="Moore C.E."/>
            <person name="Hurst L."/>
            <person name="Atkin R."/>
            <person name="Barron A."/>
            <person name="Bason N."/>
            <person name="Bentley S.D."/>
            <person name="Chillingworth C."/>
            <person name="Chillingworth T."/>
            <person name="Churcher C."/>
            <person name="Clark L."/>
            <person name="Corton C."/>
            <person name="Cronin A."/>
            <person name="Doggett J."/>
            <person name="Dowd L."/>
            <person name="Feltwell T."/>
            <person name="Hance Z."/>
            <person name="Harris B."/>
            <person name="Hauser H."/>
            <person name="Holroyd S."/>
            <person name="Jagels K."/>
            <person name="James K.D."/>
            <person name="Lennard N."/>
            <person name="Line A."/>
            <person name="Mayes R."/>
            <person name="Moule S."/>
            <person name="Mungall K."/>
            <person name="Ormond D."/>
            <person name="Quail M.A."/>
            <person name="Rabbinowitsch E."/>
            <person name="Rutherford K.M."/>
            <person name="Sanders M."/>
            <person name="Sharp S."/>
            <person name="Simmonds M."/>
            <person name="Stevens K."/>
            <person name="Whitehead S."/>
            <person name="Barrell B.G."/>
            <person name="Spratt B.G."/>
            <person name="Parkhill J."/>
        </authorList>
    </citation>
    <scope>NUCLEOTIDE SEQUENCE [LARGE SCALE GENOMIC DNA]</scope>
    <source>
        <strain>MRSA252</strain>
    </source>
</reference>
<protein>
    <recommendedName>
        <fullName evidence="1">S-adenosylmethionine:tRNA ribosyltransferase-isomerase</fullName>
        <ecNumber evidence="1">2.4.99.17</ecNumber>
    </recommendedName>
    <alternativeName>
        <fullName evidence="1">Queuosine biosynthesis protein QueA</fullName>
    </alternativeName>
</protein>
<evidence type="ECO:0000255" key="1">
    <source>
        <dbReference type="HAMAP-Rule" id="MF_00113"/>
    </source>
</evidence>
<dbReference type="EC" id="2.4.99.17" evidence="1"/>
<dbReference type="EMBL" id="BX571856">
    <property type="protein sequence ID" value="CAG40711.1"/>
    <property type="molecule type" value="Genomic_DNA"/>
</dbReference>
<dbReference type="RefSeq" id="WP_001019178.1">
    <property type="nucleotide sequence ID" value="NC_002952.2"/>
</dbReference>
<dbReference type="SMR" id="Q6GG64"/>
<dbReference type="KEGG" id="sar:SAR1720"/>
<dbReference type="HOGENOM" id="CLU_039110_1_0_9"/>
<dbReference type="UniPathway" id="UPA00392"/>
<dbReference type="Proteomes" id="UP000000596">
    <property type="component" value="Chromosome"/>
</dbReference>
<dbReference type="GO" id="GO:0005737">
    <property type="term" value="C:cytoplasm"/>
    <property type="evidence" value="ECO:0007669"/>
    <property type="project" value="UniProtKB-SubCell"/>
</dbReference>
<dbReference type="GO" id="GO:0051075">
    <property type="term" value="F:S-adenosylmethionine:tRNA ribosyltransferase-isomerase activity"/>
    <property type="evidence" value="ECO:0007669"/>
    <property type="project" value="UniProtKB-EC"/>
</dbReference>
<dbReference type="GO" id="GO:0008616">
    <property type="term" value="P:queuosine biosynthetic process"/>
    <property type="evidence" value="ECO:0007669"/>
    <property type="project" value="UniProtKB-UniRule"/>
</dbReference>
<dbReference type="GO" id="GO:0002099">
    <property type="term" value="P:tRNA wobble guanine modification"/>
    <property type="evidence" value="ECO:0007669"/>
    <property type="project" value="TreeGrafter"/>
</dbReference>
<dbReference type="FunFam" id="2.40.10.240:FF:000002">
    <property type="entry name" value="S-adenosylmethionine:tRNA ribosyltransferase-isomerase"/>
    <property type="match status" value="1"/>
</dbReference>
<dbReference type="FunFam" id="3.40.1780.10:FF:000001">
    <property type="entry name" value="S-adenosylmethionine:tRNA ribosyltransferase-isomerase"/>
    <property type="match status" value="1"/>
</dbReference>
<dbReference type="Gene3D" id="2.40.10.240">
    <property type="entry name" value="QueA-like"/>
    <property type="match status" value="1"/>
</dbReference>
<dbReference type="Gene3D" id="3.40.1780.10">
    <property type="entry name" value="QueA-like"/>
    <property type="match status" value="1"/>
</dbReference>
<dbReference type="HAMAP" id="MF_00113">
    <property type="entry name" value="QueA"/>
    <property type="match status" value="1"/>
</dbReference>
<dbReference type="InterPro" id="IPR003699">
    <property type="entry name" value="QueA"/>
</dbReference>
<dbReference type="InterPro" id="IPR042118">
    <property type="entry name" value="QueA_dom1"/>
</dbReference>
<dbReference type="InterPro" id="IPR042119">
    <property type="entry name" value="QueA_dom2"/>
</dbReference>
<dbReference type="InterPro" id="IPR036100">
    <property type="entry name" value="QueA_sf"/>
</dbReference>
<dbReference type="NCBIfam" id="NF001140">
    <property type="entry name" value="PRK00147.1"/>
    <property type="match status" value="1"/>
</dbReference>
<dbReference type="NCBIfam" id="TIGR00113">
    <property type="entry name" value="queA"/>
    <property type="match status" value="1"/>
</dbReference>
<dbReference type="PANTHER" id="PTHR30307">
    <property type="entry name" value="S-ADENOSYLMETHIONINE:TRNA RIBOSYLTRANSFERASE-ISOMERASE"/>
    <property type="match status" value="1"/>
</dbReference>
<dbReference type="PANTHER" id="PTHR30307:SF0">
    <property type="entry name" value="S-ADENOSYLMETHIONINE:TRNA RIBOSYLTRANSFERASE-ISOMERASE"/>
    <property type="match status" value="1"/>
</dbReference>
<dbReference type="Pfam" id="PF02547">
    <property type="entry name" value="Queuosine_synth"/>
    <property type="match status" value="1"/>
</dbReference>
<dbReference type="SUPFAM" id="SSF111337">
    <property type="entry name" value="QueA-like"/>
    <property type="match status" value="1"/>
</dbReference>
<accession>Q6GG64</accession>
<feature type="chain" id="PRO_0000165441" description="S-adenosylmethionine:tRNA ribosyltransferase-isomerase">
    <location>
        <begin position="1"/>
        <end position="341"/>
    </location>
</feature>
<keyword id="KW-0963">Cytoplasm</keyword>
<keyword id="KW-0671">Queuosine biosynthesis</keyword>
<keyword id="KW-0949">S-adenosyl-L-methionine</keyword>
<keyword id="KW-0808">Transferase</keyword>
<comment type="function">
    <text evidence="1">Transfers and isomerizes the ribose moiety from AdoMet to the 7-aminomethyl group of 7-deazaguanine (preQ1-tRNA) to give epoxyqueuosine (oQ-tRNA).</text>
</comment>
<comment type="catalytic activity">
    <reaction evidence="1">
        <text>7-aminomethyl-7-carbaguanosine(34) in tRNA + S-adenosyl-L-methionine = epoxyqueuosine(34) in tRNA + adenine + L-methionine + 2 H(+)</text>
        <dbReference type="Rhea" id="RHEA:32155"/>
        <dbReference type="Rhea" id="RHEA-COMP:10342"/>
        <dbReference type="Rhea" id="RHEA-COMP:18582"/>
        <dbReference type="ChEBI" id="CHEBI:15378"/>
        <dbReference type="ChEBI" id="CHEBI:16708"/>
        <dbReference type="ChEBI" id="CHEBI:57844"/>
        <dbReference type="ChEBI" id="CHEBI:59789"/>
        <dbReference type="ChEBI" id="CHEBI:82833"/>
        <dbReference type="ChEBI" id="CHEBI:194443"/>
        <dbReference type="EC" id="2.4.99.17"/>
    </reaction>
</comment>
<comment type="pathway">
    <text evidence="1">tRNA modification; tRNA-queuosine biosynthesis.</text>
</comment>
<comment type="subunit">
    <text evidence="1">Monomer.</text>
</comment>
<comment type="subcellular location">
    <subcellularLocation>
        <location evidence="1">Cytoplasm</location>
    </subcellularLocation>
</comment>
<comment type="similarity">
    <text evidence="1">Belongs to the QueA family.</text>
</comment>
<proteinExistence type="inferred from homology"/>